<evidence type="ECO:0000250" key="1"/>
<evidence type="ECO:0000255" key="2"/>
<evidence type="ECO:0000255" key="3">
    <source>
        <dbReference type="PROSITE-ProRule" id="PRU00597"/>
    </source>
</evidence>
<evidence type="ECO:0000255" key="4">
    <source>
        <dbReference type="PROSITE-ProRule" id="PRU10056"/>
    </source>
</evidence>
<evidence type="ECO:0000255" key="5">
    <source>
        <dbReference type="PROSITE-ProRule" id="PRU10057"/>
    </source>
</evidence>
<evidence type="ECO:0000256" key="6">
    <source>
        <dbReference type="SAM" id="MobiDB-lite"/>
    </source>
</evidence>
<evidence type="ECO:0000305" key="7"/>
<comment type="function">
    <text evidence="1">The biological conversion of cellulose to glucose generally requires three types of hydrolytic enzymes: (1) Endoglucanases which cut internal beta-1,4-glucosidic bonds; (2) Exocellobiohydrolases that cut the disaccharide cellobiose from the non-reducing end of the cellulose polymer chain; (3) Beta-1,4-glucosidases which hydrolyze the cellobiose and other short cello-oligosaccharides to glucose.</text>
</comment>
<comment type="catalytic activity">
    <reaction>
        <text>Hydrolysis of (1-&gt;4)-beta-D-glucosidic linkages in cellulose and cellotetraose, releasing cellobiose from the non-reducing ends of the chains.</text>
        <dbReference type="EC" id="3.2.1.91"/>
    </reaction>
</comment>
<comment type="subcellular location">
    <subcellularLocation>
        <location evidence="1">Secreted</location>
    </subcellularLocation>
</comment>
<comment type="domain">
    <text>Has a modular structure: a carbohydrate-binding module (CBM) at the N-terminus, a linker rich in threonines, and a C-terminal exocellobiohydrolase catalytic module. The genes for catalytic modules and CBMs seem to have evolved separately and have been linked by gene fusion.</text>
</comment>
<comment type="similarity">
    <text evidence="7">Belongs to the glycosyl hydrolase 6 (cellulase B) family.</text>
</comment>
<dbReference type="EC" id="3.2.1.91"/>
<dbReference type="EMBL" id="AM270264">
    <property type="protein sequence ID" value="CAK41068.1"/>
    <property type="molecule type" value="Genomic_DNA"/>
</dbReference>
<dbReference type="RefSeq" id="XP_001395308.1">
    <property type="nucleotide sequence ID" value="XM_001395271.2"/>
</dbReference>
<dbReference type="SMR" id="A2QYR9"/>
<dbReference type="CAZy" id="CBM1">
    <property type="family name" value="Carbohydrate-Binding Module Family 1"/>
</dbReference>
<dbReference type="CAZy" id="GH6">
    <property type="family name" value="Glycoside Hydrolase Family 6"/>
</dbReference>
<dbReference type="GlyCosmos" id="A2QYR9">
    <property type="glycosylation" value="1 site, No reported glycans"/>
</dbReference>
<dbReference type="EnsemblFungi" id="CAK41068">
    <property type="protein sequence ID" value="CAK41068"/>
    <property type="gene ID" value="An12g02220"/>
</dbReference>
<dbReference type="GeneID" id="4985573"/>
<dbReference type="KEGG" id="ang:An12g02220"/>
<dbReference type="VEuPathDB" id="FungiDB:An12g02220"/>
<dbReference type="HOGENOM" id="CLU_015488_0_0_1"/>
<dbReference type="Proteomes" id="UP000006706">
    <property type="component" value="Chromosome 3L"/>
</dbReference>
<dbReference type="GO" id="GO:0005576">
    <property type="term" value="C:extracellular region"/>
    <property type="evidence" value="ECO:0007669"/>
    <property type="project" value="UniProtKB-SubCell"/>
</dbReference>
<dbReference type="GO" id="GO:0016162">
    <property type="term" value="F:cellulose 1,4-beta-cellobiosidase activity"/>
    <property type="evidence" value="ECO:0007669"/>
    <property type="project" value="UniProtKB-EC"/>
</dbReference>
<dbReference type="GO" id="GO:0030248">
    <property type="term" value="F:cellulose binding"/>
    <property type="evidence" value="ECO:0007669"/>
    <property type="project" value="InterPro"/>
</dbReference>
<dbReference type="GO" id="GO:0030245">
    <property type="term" value="P:cellulose catabolic process"/>
    <property type="evidence" value="ECO:0007669"/>
    <property type="project" value="UniProtKB-KW"/>
</dbReference>
<dbReference type="FunFam" id="3.20.20.40:FF:000001">
    <property type="entry name" value="Glucanase"/>
    <property type="match status" value="1"/>
</dbReference>
<dbReference type="Gene3D" id="3.20.20.40">
    <property type="entry name" value="1, 4-beta cellobiohydrolase"/>
    <property type="match status" value="1"/>
</dbReference>
<dbReference type="InterPro" id="IPR016288">
    <property type="entry name" value="Beta_cellobiohydrolase"/>
</dbReference>
<dbReference type="InterPro" id="IPR036434">
    <property type="entry name" value="Beta_cellobiohydrolase_sf"/>
</dbReference>
<dbReference type="InterPro" id="IPR035971">
    <property type="entry name" value="CBD_sf"/>
</dbReference>
<dbReference type="InterPro" id="IPR000254">
    <property type="entry name" value="Cellulose-bd_dom_fun"/>
</dbReference>
<dbReference type="InterPro" id="IPR001524">
    <property type="entry name" value="Glyco_hydro_6_CS"/>
</dbReference>
<dbReference type="PANTHER" id="PTHR34876">
    <property type="match status" value="1"/>
</dbReference>
<dbReference type="PANTHER" id="PTHR34876:SF4">
    <property type="entry name" value="1,4-BETA-D-GLUCAN CELLOBIOHYDROLASE C-RELATED"/>
    <property type="match status" value="1"/>
</dbReference>
<dbReference type="Pfam" id="PF00734">
    <property type="entry name" value="CBM_1"/>
    <property type="match status" value="1"/>
</dbReference>
<dbReference type="Pfam" id="PF01341">
    <property type="entry name" value="Glyco_hydro_6"/>
    <property type="match status" value="1"/>
</dbReference>
<dbReference type="PIRSF" id="PIRSF001100">
    <property type="entry name" value="Beta_cellobiohydrolase"/>
    <property type="match status" value="1"/>
</dbReference>
<dbReference type="PRINTS" id="PR00733">
    <property type="entry name" value="GLHYDRLASE6"/>
</dbReference>
<dbReference type="SMART" id="SM00236">
    <property type="entry name" value="fCBD"/>
    <property type="match status" value="1"/>
</dbReference>
<dbReference type="SUPFAM" id="SSF57180">
    <property type="entry name" value="Cellulose-binding domain"/>
    <property type="match status" value="1"/>
</dbReference>
<dbReference type="SUPFAM" id="SSF51989">
    <property type="entry name" value="Glycosyl hydrolases family 6, cellulases"/>
    <property type="match status" value="1"/>
</dbReference>
<dbReference type="PROSITE" id="PS00562">
    <property type="entry name" value="CBM1_1"/>
    <property type="match status" value="1"/>
</dbReference>
<dbReference type="PROSITE" id="PS51164">
    <property type="entry name" value="CBM1_2"/>
    <property type="match status" value="1"/>
</dbReference>
<dbReference type="PROSITE" id="PS00655">
    <property type="entry name" value="GLYCOSYL_HYDROL_F6_1"/>
    <property type="match status" value="1"/>
</dbReference>
<dbReference type="PROSITE" id="PS00656">
    <property type="entry name" value="GLYCOSYL_HYDROL_F6_2"/>
    <property type="match status" value="1"/>
</dbReference>
<name>CBHC_ASPNC</name>
<feature type="signal peptide" evidence="2">
    <location>
        <begin position="1"/>
        <end position="18"/>
    </location>
</feature>
<feature type="chain" id="PRO_5000220698" description="Probable 1,4-beta-D-glucan cellobiohydrolase C">
    <location>
        <begin position="19"/>
        <end position="459"/>
    </location>
</feature>
<feature type="domain" description="CBM1" evidence="3">
    <location>
        <begin position="19"/>
        <end position="54"/>
    </location>
</feature>
<feature type="region of interest" description="Thr-rich linker">
    <location>
        <begin position="54"/>
        <end position="94"/>
    </location>
</feature>
<feature type="region of interest" description="Disordered" evidence="6">
    <location>
        <begin position="76"/>
        <end position="97"/>
    </location>
</feature>
<feature type="region of interest" description="Catalytic">
    <location>
        <begin position="95"/>
        <end position="459"/>
    </location>
</feature>
<feature type="active site" evidence="4">
    <location>
        <position position="189"/>
    </location>
</feature>
<feature type="active site" description="Proton donor" evidence="5">
    <location>
        <position position="235"/>
    </location>
</feature>
<feature type="active site" description="Nucleophile" evidence="4">
    <location>
        <position position="414"/>
    </location>
</feature>
<feature type="glycosylation site" description="N-linked (GlcNAc...) asparagine" evidence="2">
    <location>
        <position position="303"/>
    </location>
</feature>
<feature type="disulfide bond" evidence="1">
    <location>
        <begin position="26"/>
        <end position="43"/>
    </location>
</feature>
<feature type="disulfide bond" evidence="1">
    <location>
        <begin position="37"/>
        <end position="53"/>
    </location>
</feature>
<feature type="disulfide bond" evidence="1">
    <location>
        <begin position="190"/>
        <end position="249"/>
    </location>
</feature>
<feature type="disulfide bond" evidence="1">
    <location>
        <begin position="381"/>
        <end position="428"/>
    </location>
</feature>
<keyword id="KW-0119">Carbohydrate metabolism</keyword>
<keyword id="KW-0136">Cellulose degradation</keyword>
<keyword id="KW-1015">Disulfide bond</keyword>
<keyword id="KW-0325">Glycoprotein</keyword>
<keyword id="KW-0326">Glycosidase</keyword>
<keyword id="KW-0378">Hydrolase</keyword>
<keyword id="KW-0624">Polysaccharide degradation</keyword>
<keyword id="KW-1185">Reference proteome</keyword>
<keyword id="KW-0964">Secreted</keyword>
<keyword id="KW-0732">Signal</keyword>
<sequence>MHYPLSLALAFLPFGIQAQQTLWGQCGGQGYSGATSCVAGATCATVNEYYAQCTPAAGTSSATTLKTTTSSTTAAVTTTTTTQSPTGSASPTTTASASGNPFSGYQLYVNPYYSSEVASLAIPSLTGSLSSLQAAATAAAKVPSFVWLDTAAKVPTMGDYLADIQSQNAAGANPPIAGQFVVYDLPDRDCAALASNGEYSIADNGVEHYKSYIDSIREILVQYSDVHTLLVIEPDSLANLVTNLNVAKCANAESAYLECTNYALTQLNLPNVAMYLDAGHAGWLGWPANQQPAADLFASVYKNASSPAAVRGLATNVANYNAWTISSCPSYTQGNSVCDEQQYINAIAPLLQAQGFDAHFIVDTGRNGKQPTGQQAWGDWCNVINTGFGERPTTDTGDALVDAFVWVKPGGESDGTSDSSATRYDAHCGYSDALQPAPEAGTWFQAYFVQLLTNANPAF</sequence>
<organism>
    <name type="scientific">Aspergillus niger (strain ATCC MYA-4892 / CBS 513.88 / FGSC A1513)</name>
    <dbReference type="NCBI Taxonomy" id="425011"/>
    <lineage>
        <taxon>Eukaryota</taxon>
        <taxon>Fungi</taxon>
        <taxon>Dikarya</taxon>
        <taxon>Ascomycota</taxon>
        <taxon>Pezizomycotina</taxon>
        <taxon>Eurotiomycetes</taxon>
        <taxon>Eurotiomycetidae</taxon>
        <taxon>Eurotiales</taxon>
        <taxon>Aspergillaceae</taxon>
        <taxon>Aspergillus</taxon>
        <taxon>Aspergillus subgen. Circumdati</taxon>
    </lineage>
</organism>
<protein>
    <recommendedName>
        <fullName>Probable 1,4-beta-D-glucan cellobiohydrolase C</fullName>
        <ecNumber>3.2.1.91</ecNumber>
    </recommendedName>
    <alternativeName>
        <fullName>Beta-glucancellobiohydrolase C</fullName>
    </alternativeName>
    <alternativeName>
        <fullName>Exocellobiohydrolase C</fullName>
    </alternativeName>
    <alternativeName>
        <fullName>Exoglucanase C</fullName>
    </alternativeName>
</protein>
<reference key="1">
    <citation type="journal article" date="2007" name="Nat. Biotechnol.">
        <title>Genome sequencing and analysis of the versatile cell factory Aspergillus niger CBS 513.88.</title>
        <authorList>
            <person name="Pel H.J."/>
            <person name="de Winde J.H."/>
            <person name="Archer D.B."/>
            <person name="Dyer P.S."/>
            <person name="Hofmann G."/>
            <person name="Schaap P.J."/>
            <person name="Turner G."/>
            <person name="de Vries R.P."/>
            <person name="Albang R."/>
            <person name="Albermann K."/>
            <person name="Andersen M.R."/>
            <person name="Bendtsen J.D."/>
            <person name="Benen J.A.E."/>
            <person name="van den Berg M."/>
            <person name="Breestraat S."/>
            <person name="Caddick M.X."/>
            <person name="Contreras R."/>
            <person name="Cornell M."/>
            <person name="Coutinho P.M."/>
            <person name="Danchin E.G.J."/>
            <person name="Debets A.J.M."/>
            <person name="Dekker P."/>
            <person name="van Dijck P.W.M."/>
            <person name="van Dijk A."/>
            <person name="Dijkhuizen L."/>
            <person name="Driessen A.J.M."/>
            <person name="d'Enfert C."/>
            <person name="Geysens S."/>
            <person name="Goosen C."/>
            <person name="Groot G.S.P."/>
            <person name="de Groot P.W.J."/>
            <person name="Guillemette T."/>
            <person name="Henrissat B."/>
            <person name="Herweijer M."/>
            <person name="van den Hombergh J.P.T.W."/>
            <person name="van den Hondel C.A.M.J.J."/>
            <person name="van der Heijden R.T.J.M."/>
            <person name="van der Kaaij R.M."/>
            <person name="Klis F.M."/>
            <person name="Kools H.J."/>
            <person name="Kubicek C.P."/>
            <person name="van Kuyk P.A."/>
            <person name="Lauber J."/>
            <person name="Lu X."/>
            <person name="van der Maarel M.J.E.C."/>
            <person name="Meulenberg R."/>
            <person name="Menke H."/>
            <person name="Mortimer M.A."/>
            <person name="Nielsen J."/>
            <person name="Oliver S.G."/>
            <person name="Olsthoorn M."/>
            <person name="Pal K."/>
            <person name="van Peij N.N.M.E."/>
            <person name="Ram A.F.J."/>
            <person name="Rinas U."/>
            <person name="Roubos J.A."/>
            <person name="Sagt C.M.J."/>
            <person name="Schmoll M."/>
            <person name="Sun J."/>
            <person name="Ussery D."/>
            <person name="Varga J."/>
            <person name="Vervecken W."/>
            <person name="van de Vondervoort P.J.J."/>
            <person name="Wedler H."/>
            <person name="Woesten H.A.B."/>
            <person name="Zeng A.-P."/>
            <person name="van Ooyen A.J.J."/>
            <person name="Visser J."/>
            <person name="Stam H."/>
        </authorList>
    </citation>
    <scope>NUCLEOTIDE SEQUENCE [LARGE SCALE GENOMIC DNA]</scope>
    <source>
        <strain>ATCC MYA-4892 / CBS 513.88 / FGSC A1513</strain>
    </source>
</reference>
<gene>
    <name type="primary">cbhC</name>
    <name type="ORF">An12g02220</name>
</gene>
<accession>A2QYR9</accession>
<proteinExistence type="inferred from homology"/>